<dbReference type="EC" id="5.2.1.8" evidence="1"/>
<dbReference type="EMBL" id="AM902716">
    <property type="protein sequence ID" value="CAP43134.1"/>
    <property type="molecule type" value="Genomic_DNA"/>
</dbReference>
<dbReference type="SMR" id="A9IR57"/>
<dbReference type="STRING" id="94624.Bpet2792"/>
<dbReference type="KEGG" id="bpt:Bpet2792"/>
<dbReference type="eggNOG" id="COG0544">
    <property type="taxonomic scope" value="Bacteria"/>
</dbReference>
<dbReference type="Proteomes" id="UP000001225">
    <property type="component" value="Chromosome"/>
</dbReference>
<dbReference type="GO" id="GO:0005737">
    <property type="term" value="C:cytoplasm"/>
    <property type="evidence" value="ECO:0007669"/>
    <property type="project" value="UniProtKB-SubCell"/>
</dbReference>
<dbReference type="GO" id="GO:0003755">
    <property type="term" value="F:peptidyl-prolyl cis-trans isomerase activity"/>
    <property type="evidence" value="ECO:0007669"/>
    <property type="project" value="UniProtKB-UniRule"/>
</dbReference>
<dbReference type="GO" id="GO:0044183">
    <property type="term" value="F:protein folding chaperone"/>
    <property type="evidence" value="ECO:0007669"/>
    <property type="project" value="TreeGrafter"/>
</dbReference>
<dbReference type="GO" id="GO:0043022">
    <property type="term" value="F:ribosome binding"/>
    <property type="evidence" value="ECO:0007669"/>
    <property type="project" value="TreeGrafter"/>
</dbReference>
<dbReference type="GO" id="GO:0051083">
    <property type="term" value="P:'de novo' cotranslational protein folding"/>
    <property type="evidence" value="ECO:0007669"/>
    <property type="project" value="TreeGrafter"/>
</dbReference>
<dbReference type="GO" id="GO:0051301">
    <property type="term" value="P:cell division"/>
    <property type="evidence" value="ECO:0007669"/>
    <property type="project" value="UniProtKB-KW"/>
</dbReference>
<dbReference type="GO" id="GO:0061077">
    <property type="term" value="P:chaperone-mediated protein folding"/>
    <property type="evidence" value="ECO:0007669"/>
    <property type="project" value="TreeGrafter"/>
</dbReference>
<dbReference type="GO" id="GO:0015031">
    <property type="term" value="P:protein transport"/>
    <property type="evidence" value="ECO:0007669"/>
    <property type="project" value="UniProtKB-UniRule"/>
</dbReference>
<dbReference type="GO" id="GO:0043335">
    <property type="term" value="P:protein unfolding"/>
    <property type="evidence" value="ECO:0007669"/>
    <property type="project" value="TreeGrafter"/>
</dbReference>
<dbReference type="FunFam" id="3.10.50.40:FF:000001">
    <property type="entry name" value="Trigger factor"/>
    <property type="match status" value="1"/>
</dbReference>
<dbReference type="Gene3D" id="3.10.50.40">
    <property type="match status" value="1"/>
</dbReference>
<dbReference type="Gene3D" id="3.30.70.1050">
    <property type="entry name" value="Trigger factor ribosome-binding domain"/>
    <property type="match status" value="1"/>
</dbReference>
<dbReference type="Gene3D" id="1.10.3120.10">
    <property type="entry name" value="Trigger factor, C-terminal domain"/>
    <property type="match status" value="1"/>
</dbReference>
<dbReference type="HAMAP" id="MF_00303">
    <property type="entry name" value="Trigger_factor_Tig"/>
    <property type="match status" value="1"/>
</dbReference>
<dbReference type="InterPro" id="IPR046357">
    <property type="entry name" value="PPIase_dom_sf"/>
</dbReference>
<dbReference type="InterPro" id="IPR001179">
    <property type="entry name" value="PPIase_FKBP_dom"/>
</dbReference>
<dbReference type="InterPro" id="IPR005215">
    <property type="entry name" value="Trig_fac"/>
</dbReference>
<dbReference type="InterPro" id="IPR008880">
    <property type="entry name" value="Trigger_fac_C"/>
</dbReference>
<dbReference type="InterPro" id="IPR037041">
    <property type="entry name" value="Trigger_fac_C_sf"/>
</dbReference>
<dbReference type="InterPro" id="IPR008881">
    <property type="entry name" value="Trigger_fac_ribosome-bd_bac"/>
</dbReference>
<dbReference type="InterPro" id="IPR036611">
    <property type="entry name" value="Trigger_fac_ribosome-bd_sf"/>
</dbReference>
<dbReference type="InterPro" id="IPR027304">
    <property type="entry name" value="Trigger_fact/SurA_dom_sf"/>
</dbReference>
<dbReference type="NCBIfam" id="TIGR00115">
    <property type="entry name" value="tig"/>
    <property type="match status" value="1"/>
</dbReference>
<dbReference type="PANTHER" id="PTHR30560">
    <property type="entry name" value="TRIGGER FACTOR CHAPERONE AND PEPTIDYL-PROLYL CIS/TRANS ISOMERASE"/>
    <property type="match status" value="1"/>
</dbReference>
<dbReference type="PANTHER" id="PTHR30560:SF3">
    <property type="entry name" value="TRIGGER FACTOR-LIKE PROTEIN TIG, CHLOROPLASTIC"/>
    <property type="match status" value="1"/>
</dbReference>
<dbReference type="Pfam" id="PF00254">
    <property type="entry name" value="FKBP_C"/>
    <property type="match status" value="1"/>
</dbReference>
<dbReference type="Pfam" id="PF05698">
    <property type="entry name" value="Trigger_C"/>
    <property type="match status" value="1"/>
</dbReference>
<dbReference type="Pfam" id="PF05697">
    <property type="entry name" value="Trigger_N"/>
    <property type="match status" value="1"/>
</dbReference>
<dbReference type="PIRSF" id="PIRSF003095">
    <property type="entry name" value="Trigger_factor"/>
    <property type="match status" value="1"/>
</dbReference>
<dbReference type="SUPFAM" id="SSF54534">
    <property type="entry name" value="FKBP-like"/>
    <property type="match status" value="1"/>
</dbReference>
<dbReference type="SUPFAM" id="SSF109998">
    <property type="entry name" value="Triger factor/SurA peptide-binding domain-like"/>
    <property type="match status" value="1"/>
</dbReference>
<dbReference type="SUPFAM" id="SSF102735">
    <property type="entry name" value="Trigger factor ribosome-binding domain"/>
    <property type="match status" value="1"/>
</dbReference>
<dbReference type="PROSITE" id="PS50059">
    <property type="entry name" value="FKBP_PPIASE"/>
    <property type="match status" value="1"/>
</dbReference>
<gene>
    <name evidence="1" type="primary">tig</name>
    <name type="ordered locus">Bpet2792</name>
</gene>
<proteinExistence type="inferred from homology"/>
<evidence type="ECO:0000255" key="1">
    <source>
        <dbReference type="HAMAP-Rule" id="MF_00303"/>
    </source>
</evidence>
<organism>
    <name type="scientific">Bordetella petrii (strain ATCC BAA-461 / DSM 12804 / CCUG 43448)</name>
    <dbReference type="NCBI Taxonomy" id="340100"/>
    <lineage>
        <taxon>Bacteria</taxon>
        <taxon>Pseudomonadati</taxon>
        <taxon>Pseudomonadota</taxon>
        <taxon>Betaproteobacteria</taxon>
        <taxon>Burkholderiales</taxon>
        <taxon>Alcaligenaceae</taxon>
        <taxon>Bordetella</taxon>
    </lineage>
</organism>
<reference key="1">
    <citation type="journal article" date="2008" name="BMC Genomics">
        <title>The missing link: Bordetella petrii is endowed with both the metabolic versatility of environmental bacteria and virulence traits of pathogenic Bordetellae.</title>
        <authorList>
            <person name="Gross R."/>
            <person name="Guzman C.A."/>
            <person name="Sebaihia M."/>
            <person name="Martin dos Santos V.A.P."/>
            <person name="Pieper D.H."/>
            <person name="Koebnik R."/>
            <person name="Lechner M."/>
            <person name="Bartels D."/>
            <person name="Buhrmester J."/>
            <person name="Choudhuri J.V."/>
            <person name="Ebensen T."/>
            <person name="Gaigalat L."/>
            <person name="Herrmann S."/>
            <person name="Khachane A.N."/>
            <person name="Larisch C."/>
            <person name="Link S."/>
            <person name="Linke B."/>
            <person name="Meyer F."/>
            <person name="Mormann S."/>
            <person name="Nakunst D."/>
            <person name="Rueckert C."/>
            <person name="Schneiker-Bekel S."/>
            <person name="Schulze K."/>
            <person name="Voerholter F.-J."/>
            <person name="Yevsa T."/>
            <person name="Engle J.T."/>
            <person name="Goldman W.E."/>
            <person name="Puehler A."/>
            <person name="Goebel U.B."/>
            <person name="Goesmann A."/>
            <person name="Bloecker H."/>
            <person name="Kaiser O."/>
            <person name="Martinez-Arias R."/>
        </authorList>
    </citation>
    <scope>NUCLEOTIDE SEQUENCE [LARGE SCALE GENOMIC DNA]</scope>
    <source>
        <strain>ATCC BAA-461 / DSM 12804 / CCUG 43448</strain>
    </source>
</reference>
<protein>
    <recommendedName>
        <fullName evidence="1">Trigger factor</fullName>
        <shortName evidence="1">TF</shortName>
        <ecNumber evidence="1">5.2.1.8</ecNumber>
    </recommendedName>
    <alternativeName>
        <fullName evidence="1">PPIase</fullName>
    </alternativeName>
</protein>
<name>TIG_BORPD</name>
<accession>A9IR57</accession>
<feature type="chain" id="PRO_1000115504" description="Trigger factor">
    <location>
        <begin position="1"/>
        <end position="436"/>
    </location>
</feature>
<feature type="domain" description="PPIase FKBP-type" evidence="1">
    <location>
        <begin position="163"/>
        <end position="248"/>
    </location>
</feature>
<comment type="function">
    <text evidence="1">Involved in protein export. Acts as a chaperone by maintaining the newly synthesized protein in an open conformation. Functions as a peptidyl-prolyl cis-trans isomerase.</text>
</comment>
<comment type="catalytic activity">
    <reaction evidence="1">
        <text>[protein]-peptidylproline (omega=180) = [protein]-peptidylproline (omega=0)</text>
        <dbReference type="Rhea" id="RHEA:16237"/>
        <dbReference type="Rhea" id="RHEA-COMP:10747"/>
        <dbReference type="Rhea" id="RHEA-COMP:10748"/>
        <dbReference type="ChEBI" id="CHEBI:83833"/>
        <dbReference type="ChEBI" id="CHEBI:83834"/>
        <dbReference type="EC" id="5.2.1.8"/>
    </reaction>
</comment>
<comment type="subcellular location">
    <subcellularLocation>
        <location>Cytoplasm</location>
    </subcellularLocation>
    <text evidence="1">About half TF is bound to the ribosome near the polypeptide exit tunnel while the other half is free in the cytoplasm.</text>
</comment>
<comment type="domain">
    <text evidence="1">Consists of 3 domains; the N-terminus binds the ribosome, the middle domain has PPIase activity, while the C-terminus has intrinsic chaperone activity on its own.</text>
</comment>
<comment type="similarity">
    <text evidence="1">Belongs to the FKBP-type PPIase family. Tig subfamily.</text>
</comment>
<sequence length="436" mass="47600">MQPVVETLSGLERRVDLAVSVADVEKEVQAQLKRVARTAKVPGFRPGKAPLAMLERSHGPGIRYDVINGQVGRAFEQAVDGAKLRVAGSPTLEPKTEGVADDTLAFTATFEVYPEVAVPDLSALSVTRYETAVTDAEVQQTLDVLRKQRANFEAREGRAAQDGDRVTLDFAGTIDGVPFEGGKAESFPFVLGQGRMLPEFEAAAKGLKAGETKVFPLKFPDDYQGKEVAGKTAEFTITVKEVAEGVLPEVNAEFAKSLGQAEGDVEKLKADIRTNIEREAKARTQGRTKASVMDALVEAGKFDVPKALVDSDVQSRVQAAREELKQRGVPNAESVPIPAEAFATESERRVRLGLLVSELVKQAQLQAKPEQVRARIEEFAQNYEQPAQVVSYYLADRQRRAEIEAIVLEDNVVQHVLDKAKVTEEKVPFDQLMGMA</sequence>
<keyword id="KW-0131">Cell cycle</keyword>
<keyword id="KW-0132">Cell division</keyword>
<keyword id="KW-0143">Chaperone</keyword>
<keyword id="KW-0963">Cytoplasm</keyword>
<keyword id="KW-0413">Isomerase</keyword>
<keyword id="KW-0697">Rotamase</keyword>